<comment type="function">
    <text evidence="1">May regulate the stability of some mitochondrial mRNA species.</text>
</comment>
<comment type="subcellular location">
    <subcellularLocation>
        <location evidence="1">Mitochondrion</location>
    </subcellularLocation>
</comment>
<comment type="domain">
    <text evidence="1">The RAP domain seems to regulate mitochondrial mRNA levels.</text>
</comment>
<comment type="similarity">
    <text evidence="3">Belongs to the FAST kinase family.</text>
</comment>
<keyword id="KW-0496">Mitochondrion</keyword>
<keyword id="KW-1185">Reference proteome</keyword>
<keyword id="KW-0809">Transit peptide</keyword>
<name>FAKD1_XENLA</name>
<reference key="1">
    <citation type="submission" date="2004-06" db="EMBL/GenBank/DDBJ databases">
        <authorList>
            <consortium name="NIH - Xenopus Gene Collection (XGC) project"/>
        </authorList>
    </citation>
    <scope>NUCLEOTIDE SEQUENCE [LARGE SCALE MRNA]</scope>
    <source>
        <tissue>Ovary</tissue>
    </source>
</reference>
<accession>Q6GQ66</accession>
<dbReference type="EMBL" id="BC072882">
    <property type="protein sequence ID" value="AAH72882.1"/>
    <property type="molecule type" value="mRNA"/>
</dbReference>
<dbReference type="RefSeq" id="NP_001085520.1">
    <property type="nucleotide sequence ID" value="NM_001092051.1"/>
</dbReference>
<dbReference type="SMR" id="Q6GQ66"/>
<dbReference type="DNASU" id="443946"/>
<dbReference type="GeneID" id="443946"/>
<dbReference type="KEGG" id="xla:443946"/>
<dbReference type="AGR" id="Xenbase:XB-GENE-5730785"/>
<dbReference type="CTD" id="443946"/>
<dbReference type="Xenbase" id="XB-GENE-5730785">
    <property type="gene designation" value="fastkd1.L"/>
</dbReference>
<dbReference type="OrthoDB" id="385235at2759"/>
<dbReference type="Proteomes" id="UP000186698">
    <property type="component" value="Chromosome 9_10L"/>
</dbReference>
<dbReference type="Bgee" id="443946">
    <property type="expression patterns" value="Expressed in egg cell and 19 other cell types or tissues"/>
</dbReference>
<dbReference type="GO" id="GO:0005759">
    <property type="term" value="C:mitochondrial matrix"/>
    <property type="evidence" value="ECO:0000318"/>
    <property type="project" value="GO_Central"/>
</dbReference>
<dbReference type="GO" id="GO:0005739">
    <property type="term" value="C:mitochondrion"/>
    <property type="evidence" value="ECO:0000250"/>
    <property type="project" value="UniProtKB"/>
</dbReference>
<dbReference type="GO" id="GO:0035770">
    <property type="term" value="C:ribonucleoprotein granule"/>
    <property type="evidence" value="ECO:0000318"/>
    <property type="project" value="GO_Central"/>
</dbReference>
<dbReference type="GO" id="GO:0003723">
    <property type="term" value="F:RNA binding"/>
    <property type="evidence" value="ECO:0000318"/>
    <property type="project" value="GO_Central"/>
</dbReference>
<dbReference type="GO" id="GO:0000963">
    <property type="term" value="P:mitochondrial RNA processing"/>
    <property type="evidence" value="ECO:0000318"/>
    <property type="project" value="GO_Central"/>
</dbReference>
<dbReference type="GO" id="GO:0044528">
    <property type="term" value="P:regulation of mitochondrial mRNA stability"/>
    <property type="evidence" value="ECO:0000318"/>
    <property type="project" value="GO_Central"/>
</dbReference>
<dbReference type="InterPro" id="IPR013579">
    <property type="entry name" value="FAST_2"/>
</dbReference>
<dbReference type="InterPro" id="IPR050870">
    <property type="entry name" value="FAST_kinase"/>
</dbReference>
<dbReference type="InterPro" id="IPR010622">
    <property type="entry name" value="FAST_Leu-rich"/>
</dbReference>
<dbReference type="InterPro" id="IPR013584">
    <property type="entry name" value="RAP"/>
</dbReference>
<dbReference type="PANTHER" id="PTHR21228:SF29">
    <property type="entry name" value="FAST KINASE DOMAIN-CONTAINING PROTEIN 1, MITOCHONDRIAL"/>
    <property type="match status" value="1"/>
</dbReference>
<dbReference type="PANTHER" id="PTHR21228">
    <property type="entry name" value="FAST LEU-RICH DOMAIN-CONTAINING"/>
    <property type="match status" value="1"/>
</dbReference>
<dbReference type="Pfam" id="PF06743">
    <property type="entry name" value="FAST_1"/>
    <property type="match status" value="1"/>
</dbReference>
<dbReference type="Pfam" id="PF08368">
    <property type="entry name" value="FAST_2"/>
    <property type="match status" value="1"/>
</dbReference>
<dbReference type="Pfam" id="PF08373">
    <property type="entry name" value="RAP"/>
    <property type="match status" value="1"/>
</dbReference>
<dbReference type="SMART" id="SM00952">
    <property type="entry name" value="RAP"/>
    <property type="match status" value="1"/>
</dbReference>
<dbReference type="PROSITE" id="PS51286">
    <property type="entry name" value="RAP"/>
    <property type="match status" value="1"/>
</dbReference>
<organism>
    <name type="scientific">Xenopus laevis</name>
    <name type="common">African clawed frog</name>
    <dbReference type="NCBI Taxonomy" id="8355"/>
    <lineage>
        <taxon>Eukaryota</taxon>
        <taxon>Metazoa</taxon>
        <taxon>Chordata</taxon>
        <taxon>Craniata</taxon>
        <taxon>Vertebrata</taxon>
        <taxon>Euteleostomi</taxon>
        <taxon>Amphibia</taxon>
        <taxon>Batrachia</taxon>
        <taxon>Anura</taxon>
        <taxon>Pipoidea</taxon>
        <taxon>Pipidae</taxon>
        <taxon>Xenopodinae</taxon>
        <taxon>Xenopus</taxon>
        <taxon>Xenopus</taxon>
    </lineage>
</organism>
<feature type="transit peptide" description="Mitochondrion" evidence="3">
    <location>
        <begin position="1"/>
        <end status="unknown"/>
    </location>
</feature>
<feature type="chain" id="PRO_0000284712" description="FAST kinase domain-containing protein 1, mitochondrial">
    <location>
        <begin status="unknown"/>
        <end position="832"/>
    </location>
</feature>
<feature type="domain" description="RAP" evidence="2">
    <location>
        <begin position="765"/>
        <end position="825"/>
    </location>
</feature>
<proteinExistence type="evidence at transcript level"/>
<sequence>MFRWSCAHRLSRSLCQTRFLSTDPLLDQLKICISEDQVFQLVGKNKARLSVTHVGHAINLLWKFQKEKPRMLRTIDQVRGHPEFIALRILAENKIEFMEDNALVEILYNILRFSVEPHDSLVQQLVMEGWRRLERFNLKEISKFAVCLGEQHMHMSPLMGHIASIVDGILDDVQDARILSSLMVNIHGVITPMLRDRLVDKADSLMDTLDVSHFNHPRRIVQFLRNMKHTYRPLLEKCNNAFLQNIGQMDPENLSIIIGLYQSLQYNNSEFRLMARNRLIEMVDQCNNVASYTKLFAALGPMAGQETREKLEEGILTMVDGMNPNQLLAVLGTMEEMECRNTLLIARIASLLQKYLGIYRPVELARITQAIVNLRCQTPELFSMLQKILERNLKSSFIPGDVAMLARVISSLPAARVDEEVFSKVDAILPQCSLSDLSSLALAIVKWVRTEQPSRYSTSGGLGNLLHKLNTCGHERITKIDKIDLFLEELKYITGDWLEEVLLKDAISTCERLIDQITWKNLPEFALFITRTNYLCAPVLNKIASVATEDITKIHYNATYAILLPFVVLNYEPPNGEAFFDACIQHVLPHLNSLDPHLVVLLAYSLALAEYFPEELIKAVFNIDFLGRLDAQLETFSSTLNLRIRLRLMELNRAVCLECPEFQIPWFHDRYCKQLQHRANAGISSVQRQIHQLLGEILGGINYAKVSVMTPYYHTIDFECILDKNKKPILYLDQNVLSADLSKVQWGNGGQLQETKSLPPGAQRVAIEFLDSKAFSKNSSNIKGEYMMKKRHLEILGYHVLQISSLEWNSMELSTKDAWMDYLRKRIFTDDL</sequence>
<gene>
    <name type="primary">fastkd1</name>
</gene>
<protein>
    <recommendedName>
        <fullName>FAST kinase domain-containing protein 1, mitochondrial</fullName>
    </recommendedName>
</protein>
<evidence type="ECO:0000250" key="1">
    <source>
        <dbReference type="UniProtKB" id="Q53R41"/>
    </source>
</evidence>
<evidence type="ECO:0000255" key="2">
    <source>
        <dbReference type="PROSITE-ProRule" id="PRU00619"/>
    </source>
</evidence>
<evidence type="ECO:0000305" key="3"/>